<organism>
    <name type="scientific">Rickettsia prowazekii (strain Madrid E)</name>
    <dbReference type="NCBI Taxonomy" id="272947"/>
    <lineage>
        <taxon>Bacteria</taxon>
        <taxon>Pseudomonadati</taxon>
        <taxon>Pseudomonadota</taxon>
        <taxon>Alphaproteobacteria</taxon>
        <taxon>Rickettsiales</taxon>
        <taxon>Rickettsiaceae</taxon>
        <taxon>Rickettsieae</taxon>
        <taxon>Rickettsia</taxon>
        <taxon>typhus group</taxon>
    </lineage>
</organism>
<reference key="1">
    <citation type="journal article" date="1998" name="Nature">
        <title>The genome sequence of Rickettsia prowazekii and the origin of mitochondria.</title>
        <authorList>
            <person name="Andersson S.G.E."/>
            <person name="Zomorodipour A."/>
            <person name="Andersson J.O."/>
            <person name="Sicheritz-Ponten T."/>
            <person name="Alsmark U.C.M."/>
            <person name="Podowski R.M."/>
            <person name="Naeslund A.K."/>
            <person name="Eriksson A.-S."/>
            <person name="Winkler H.H."/>
            <person name="Kurland C.G."/>
        </authorList>
    </citation>
    <scope>NUCLEOTIDE SEQUENCE [LARGE SCALE GENOMIC DNA]</scope>
    <source>
        <strain>Madrid E</strain>
    </source>
</reference>
<accession>Q9ZDT4</accession>
<sequence length="231" mass="26188">MKQYNDLFKIIHREGYIFIASFALVSFLLASFNEKLGCIGFIATIWCIYFFRNPDRFVPISDDLVISPADGIIQEIKEASPPPELGLGDLEMIRVSIFLNIFNIHVNRIPANGKILALHYNPGKFFNASLDKASLYNERQSVLMETDQGQKIVFVQIAGLIARRIVCDLEEDNEVKMGERYGIIRFGSRVDVYLPLKTALLVSKGQTAIGGETIIADFGRKKTEEFKFERK</sequence>
<keyword id="KW-1003">Cell membrane</keyword>
<keyword id="KW-0210">Decarboxylase</keyword>
<keyword id="KW-0444">Lipid biosynthesis</keyword>
<keyword id="KW-0443">Lipid metabolism</keyword>
<keyword id="KW-0456">Lyase</keyword>
<keyword id="KW-0472">Membrane</keyword>
<keyword id="KW-0594">Phospholipid biosynthesis</keyword>
<keyword id="KW-1208">Phospholipid metabolism</keyword>
<keyword id="KW-0670">Pyruvate</keyword>
<keyword id="KW-1185">Reference proteome</keyword>
<keyword id="KW-0865">Zymogen</keyword>
<comment type="function">
    <text evidence="1">Catalyzes the formation of phosphatidylethanolamine (PtdEtn) from phosphatidylserine (PtdSer).</text>
</comment>
<comment type="catalytic activity">
    <reaction evidence="1">
        <text>a 1,2-diacyl-sn-glycero-3-phospho-L-serine + H(+) = a 1,2-diacyl-sn-glycero-3-phosphoethanolamine + CO2</text>
        <dbReference type="Rhea" id="RHEA:20828"/>
        <dbReference type="ChEBI" id="CHEBI:15378"/>
        <dbReference type="ChEBI" id="CHEBI:16526"/>
        <dbReference type="ChEBI" id="CHEBI:57262"/>
        <dbReference type="ChEBI" id="CHEBI:64612"/>
        <dbReference type="EC" id="4.1.1.65"/>
    </reaction>
</comment>
<comment type="cofactor">
    <cofactor evidence="1">
        <name>pyruvate</name>
        <dbReference type="ChEBI" id="CHEBI:15361"/>
    </cofactor>
    <text evidence="1">Binds 1 pyruvoyl group covalently per subunit.</text>
</comment>
<comment type="pathway">
    <text evidence="1">Phospholipid metabolism; phosphatidylethanolamine biosynthesis; phosphatidylethanolamine from CDP-diacylglycerol: step 2/2.</text>
</comment>
<comment type="subunit">
    <text evidence="1">Heterodimer of a large membrane-associated beta subunit and a small pyruvoyl-containing alpha subunit.</text>
</comment>
<comment type="subcellular location">
    <subcellularLocation>
        <location evidence="1">Cell membrane</location>
        <topology evidence="1">Peripheral membrane protein</topology>
    </subcellularLocation>
</comment>
<comment type="PTM">
    <text evidence="1">Is synthesized initially as an inactive proenzyme. Formation of the active enzyme involves a self-maturation process in which the active site pyruvoyl group is generated from an internal serine residue via an autocatalytic post-translational modification. Two non-identical subunits are generated from the proenzyme in this reaction, and the pyruvate is formed at the N-terminus of the alpha chain, which is derived from the carboxyl end of the proenzyme. The post-translation cleavage follows an unusual pathway, termed non-hydrolytic serinolysis, in which the side chain hydroxyl group of the serine supplies its oxygen atom to form the C-terminus of the beta chain, while the remainder of the serine residue undergoes an oxidative deamination to produce ammonia and the pyruvoyl prosthetic group on the alpha chain.</text>
</comment>
<comment type="similarity">
    <text evidence="1">Belongs to the phosphatidylserine decarboxylase family. PSD-A subfamily.</text>
</comment>
<name>PSD_RICPR</name>
<proteinExistence type="inferred from homology"/>
<evidence type="ECO:0000255" key="1">
    <source>
        <dbReference type="HAMAP-Rule" id="MF_00664"/>
    </source>
</evidence>
<protein>
    <recommendedName>
        <fullName evidence="1">Phosphatidylserine decarboxylase proenzyme</fullName>
        <ecNumber evidence="1">4.1.1.65</ecNumber>
    </recommendedName>
    <component>
        <recommendedName>
            <fullName evidence="1">Phosphatidylserine decarboxylase alpha chain</fullName>
        </recommendedName>
    </component>
    <component>
        <recommendedName>
            <fullName evidence="1">Phosphatidylserine decarboxylase beta chain</fullName>
        </recommendedName>
    </component>
</protein>
<gene>
    <name evidence="1" type="primary">psd</name>
    <name type="ordered locus">RP241</name>
</gene>
<feature type="chain" id="PRO_0000029805" description="Phosphatidylserine decarboxylase beta chain" evidence="1">
    <location>
        <begin position="1"/>
        <end position="187"/>
    </location>
</feature>
<feature type="chain" id="PRO_0000029806" description="Phosphatidylserine decarboxylase alpha chain" evidence="1">
    <location>
        <begin position="188"/>
        <end position="231"/>
    </location>
</feature>
<feature type="active site" description="Schiff-base intermediate with substrate; via pyruvic acid" evidence="1">
    <location>
        <position position="188"/>
    </location>
</feature>
<feature type="site" description="Cleavage (non-hydrolytic); by autocatalysis" evidence="1">
    <location>
        <begin position="187"/>
        <end position="188"/>
    </location>
</feature>
<feature type="modified residue" description="Pyruvic acid (Ser); by autocatalysis" evidence="1">
    <location>
        <position position="188"/>
    </location>
</feature>
<dbReference type="EC" id="4.1.1.65" evidence="1"/>
<dbReference type="EMBL" id="AJ235271">
    <property type="protein sequence ID" value="CAA14703.1"/>
    <property type="molecule type" value="Genomic_DNA"/>
</dbReference>
<dbReference type="PIR" id="E71678">
    <property type="entry name" value="E71678"/>
</dbReference>
<dbReference type="RefSeq" id="NP_220626.1">
    <property type="nucleotide sequence ID" value="NC_000963.1"/>
</dbReference>
<dbReference type="RefSeq" id="WP_004598533.1">
    <property type="nucleotide sequence ID" value="NC_000963.1"/>
</dbReference>
<dbReference type="SMR" id="Q9ZDT4"/>
<dbReference type="STRING" id="272947.gene:17555322"/>
<dbReference type="EnsemblBacteria" id="CAA14703">
    <property type="protein sequence ID" value="CAA14703"/>
    <property type="gene ID" value="CAA14703"/>
</dbReference>
<dbReference type="KEGG" id="rpr:RP241"/>
<dbReference type="PATRIC" id="fig|272947.5.peg.248"/>
<dbReference type="eggNOG" id="COG0688">
    <property type="taxonomic scope" value="Bacteria"/>
</dbReference>
<dbReference type="HOGENOM" id="CLU_072492_0_0_5"/>
<dbReference type="OrthoDB" id="9790893at2"/>
<dbReference type="UniPathway" id="UPA00558">
    <property type="reaction ID" value="UER00616"/>
</dbReference>
<dbReference type="Proteomes" id="UP000002480">
    <property type="component" value="Chromosome"/>
</dbReference>
<dbReference type="GO" id="GO:0005886">
    <property type="term" value="C:plasma membrane"/>
    <property type="evidence" value="ECO:0007669"/>
    <property type="project" value="UniProtKB-SubCell"/>
</dbReference>
<dbReference type="GO" id="GO:0004609">
    <property type="term" value="F:phosphatidylserine decarboxylase activity"/>
    <property type="evidence" value="ECO:0007669"/>
    <property type="project" value="UniProtKB-UniRule"/>
</dbReference>
<dbReference type="GO" id="GO:0006646">
    <property type="term" value="P:phosphatidylethanolamine biosynthetic process"/>
    <property type="evidence" value="ECO:0007669"/>
    <property type="project" value="UniProtKB-UniRule"/>
</dbReference>
<dbReference type="HAMAP" id="MF_00664">
    <property type="entry name" value="PS_decarb_PSD_A"/>
    <property type="match status" value="1"/>
</dbReference>
<dbReference type="InterPro" id="IPR003817">
    <property type="entry name" value="PS_Dcarbxylase"/>
</dbReference>
<dbReference type="InterPro" id="IPR033175">
    <property type="entry name" value="PSD-A"/>
</dbReference>
<dbReference type="NCBIfam" id="NF003677">
    <property type="entry name" value="PRK05305.1-1"/>
    <property type="match status" value="1"/>
</dbReference>
<dbReference type="NCBIfam" id="NF003678">
    <property type="entry name" value="PRK05305.1-2"/>
    <property type="match status" value="1"/>
</dbReference>
<dbReference type="NCBIfam" id="NF003679">
    <property type="entry name" value="PRK05305.1-3"/>
    <property type="match status" value="1"/>
</dbReference>
<dbReference type="NCBIfam" id="NF003681">
    <property type="entry name" value="PRK05305.2-1"/>
    <property type="match status" value="1"/>
</dbReference>
<dbReference type="NCBIfam" id="NF003685">
    <property type="entry name" value="PRK05305.2-5"/>
    <property type="match status" value="1"/>
</dbReference>
<dbReference type="PANTHER" id="PTHR35809">
    <property type="entry name" value="ARCHAETIDYLSERINE DECARBOXYLASE PROENZYME-RELATED"/>
    <property type="match status" value="1"/>
</dbReference>
<dbReference type="PANTHER" id="PTHR35809:SF1">
    <property type="entry name" value="ARCHAETIDYLSERINE DECARBOXYLASE PROENZYME-RELATED"/>
    <property type="match status" value="1"/>
</dbReference>
<dbReference type="Pfam" id="PF02666">
    <property type="entry name" value="PS_Dcarbxylase"/>
    <property type="match status" value="1"/>
</dbReference>